<protein>
    <recommendedName>
        <fullName evidence="5">Fasciclin-like arabinogalactan protein</fullName>
        <shortName evidence="5">FLA protein</shortName>
    </recommendedName>
</protein>
<sequence>APTPATLNGLTIFAPNDEAFKATGVPDLSKLSNAPMVSLLQYHAAAR</sequence>
<comment type="function">
    <text evidence="1">May be a cell surface adhesion protein.</text>
</comment>
<comment type="similarity">
    <text evidence="2">Belongs to the fasciclin-like AGP family.</text>
</comment>
<keyword id="KW-0903">Direct protein sequencing</keyword>
<proteinExistence type="evidence at protein level"/>
<accession>C0HJG5</accession>
<organism>
    <name type="scientific">Jatropha curcas</name>
    <name type="common">Barbados nut</name>
    <dbReference type="NCBI Taxonomy" id="180498"/>
    <lineage>
        <taxon>Eukaryota</taxon>
        <taxon>Viridiplantae</taxon>
        <taxon>Streptophyta</taxon>
        <taxon>Embryophyta</taxon>
        <taxon>Tracheophyta</taxon>
        <taxon>Spermatophyta</taxon>
        <taxon>Magnoliopsida</taxon>
        <taxon>eudicotyledons</taxon>
        <taxon>Gunneridae</taxon>
        <taxon>Pentapetalae</taxon>
        <taxon>rosids</taxon>
        <taxon>fabids</taxon>
        <taxon>Malpighiales</taxon>
        <taxon>Euphorbiaceae</taxon>
        <taxon>Crotonoideae</taxon>
        <taxon>Jatropheae</taxon>
        <taxon>Jatropha</taxon>
    </lineage>
</organism>
<name>FLA_JATCU</name>
<evidence type="ECO:0000250" key="1">
    <source>
        <dbReference type="UniProtKB" id="Q9FM65"/>
    </source>
</evidence>
<evidence type="ECO:0000255" key="2"/>
<evidence type="ECO:0000255" key="3">
    <source>
        <dbReference type="PROSITE-ProRule" id="PRU00082"/>
    </source>
</evidence>
<evidence type="ECO:0000269" key="4">
    <source>
    </source>
</evidence>
<evidence type="ECO:0000303" key="5">
    <source>
    </source>
</evidence>
<evidence type="ECO:0000305" key="6"/>
<feature type="chain" id="PRO_0000428915" description="Fasciclin-like arabinogalactan protein">
    <location>
        <begin position="1" status="less than"/>
        <end position="47" status="greater than"/>
    </location>
</feature>
<feature type="domain" description="FAS1" evidence="3">
    <location>
        <begin position="1" status="less than"/>
        <end position="47" status="greater than"/>
    </location>
</feature>
<feature type="non-terminal residue" evidence="5">
    <location>
        <position position="1"/>
    </location>
</feature>
<feature type="non-terminal residue" evidence="5">
    <location>
        <position position="47"/>
    </location>
</feature>
<reference evidence="6" key="1">
    <citation type="journal article" date="2013" name="Carbohydr. Polym.">
        <title>Arabinogalactan protein cluster from Jatropha curcas seed embryo contains fasciclin, xylogen and LysM proteins.</title>
        <authorList>
            <person name="Sehlbach M."/>
            <person name="Konig S."/>
            <person name="Mormann M."/>
            <person name="Sendker J."/>
            <person name="Hensel A."/>
        </authorList>
    </citation>
    <scope>PROTEIN SEQUENCE</scope>
    <scope>IDENTIFICATION BY MASS SPECTROMETRY</scope>
    <source>
        <tissue evidence="4">Seed</tissue>
    </source>
</reference>
<dbReference type="SMR" id="C0HJG5"/>
<dbReference type="Gene3D" id="2.30.180.10">
    <property type="entry name" value="FAS1 domain"/>
    <property type="match status" value="1"/>
</dbReference>
<dbReference type="InterPro" id="IPR036378">
    <property type="entry name" value="FAS1_dom_sf"/>
</dbReference>
<dbReference type="InterPro" id="IPR000782">
    <property type="entry name" value="FAS1_domain"/>
</dbReference>
<dbReference type="Pfam" id="PF02469">
    <property type="entry name" value="Fasciclin"/>
    <property type="match status" value="1"/>
</dbReference>
<dbReference type="SUPFAM" id="SSF82153">
    <property type="entry name" value="FAS1 domain"/>
    <property type="match status" value="1"/>
</dbReference>
<dbReference type="PROSITE" id="PS50213">
    <property type="entry name" value="FAS1"/>
    <property type="match status" value="1"/>
</dbReference>